<name>ITP_EBVB9</name>
<keyword id="KW-1035">Host cytoplasm</keyword>
<keyword id="KW-1040">Host Golgi apparatus</keyword>
<keyword id="KW-1048">Host nucleus</keyword>
<keyword id="KW-1185">Reference proteome</keyword>
<keyword id="KW-0946">Virion</keyword>
<keyword id="KW-0920">Virion tegument</keyword>
<dbReference type="EMBL" id="V01555">
    <property type="protein sequence ID" value="CAA24841.1"/>
    <property type="molecule type" value="Genomic_DNA"/>
</dbReference>
<dbReference type="EMBL" id="AJ507799">
    <property type="protein sequence ID" value="CAD53403.1"/>
    <property type="molecule type" value="Genomic_DNA"/>
</dbReference>
<dbReference type="PIR" id="A43041">
    <property type="entry name" value="QQBE10"/>
</dbReference>
<dbReference type="RefSeq" id="YP_401653.1">
    <property type="nucleotide sequence ID" value="NC_007605.1"/>
</dbReference>
<dbReference type="DNASU" id="3783723"/>
<dbReference type="GeneID" id="3783723"/>
<dbReference type="KEGG" id="vg:3783723"/>
<dbReference type="Proteomes" id="UP000153037">
    <property type="component" value="Segment"/>
</dbReference>
<dbReference type="GO" id="GO:0044177">
    <property type="term" value="C:host cell Golgi apparatus"/>
    <property type="evidence" value="ECO:0007669"/>
    <property type="project" value="UniProtKB-SubCell"/>
</dbReference>
<dbReference type="GO" id="GO:0042025">
    <property type="term" value="C:host cell nucleus"/>
    <property type="evidence" value="ECO:0007669"/>
    <property type="project" value="UniProtKB-SubCell"/>
</dbReference>
<dbReference type="GO" id="GO:0019033">
    <property type="term" value="C:viral tegument"/>
    <property type="evidence" value="ECO:0007669"/>
    <property type="project" value="UniProtKB-SubCell"/>
</dbReference>
<dbReference type="GO" id="GO:0019068">
    <property type="term" value="P:virion assembly"/>
    <property type="evidence" value="ECO:0007669"/>
    <property type="project" value="InterPro"/>
</dbReference>
<dbReference type="HAMAP" id="MF_04043">
    <property type="entry name" value="HSV_ITP"/>
    <property type="match status" value="1"/>
</dbReference>
<dbReference type="InterPro" id="IPR007611">
    <property type="entry name" value="Herpes_U30"/>
</dbReference>
<dbReference type="InterPro" id="IPR034738">
    <property type="entry name" value="HSV_ITP"/>
</dbReference>
<dbReference type="Pfam" id="PF04523">
    <property type="entry name" value="Herpes_U30"/>
    <property type="match status" value="1"/>
</dbReference>
<sequence length="1239" mass="132749">MASAMESDSSGGSGGADAQPPLAEVDGGLARVTRQLLLSGDDPAARLRALMPLELGIFGLGDLAQPVLVRDFLNTLTLMSGHAYPAAVLRHHAYYLLRAASFSRRSFGLGHLEAALDVLASSLPPTTASPATDDPLDGSRLIAETRALAAAYRRIIEEGSGEVLAVSGPTATFAFVEELVADTYLARWDAFPREGLSFYAFNAAKTTLGRWLVTVYAETNRYPWAAAGQGQPTAADIKAMAVELVEHSGGGAGGGEGEESGGGLFHRPESLSSVVASLPLARRRAVEILGVYAEASGGQTPPVAAVPVLAFDAARLRLLEPSGALFYDYVYEALLWDQTYGVPDSVIEAFLAGMAAEMEALAARVQEAAGSRASFSPAAIEQVATVLLSAGLNETVAGDYAMMLASVPRVSRSRWRWLEATAALLESLSGFALHFFRLLPTASPTSRFARVARAAYLRAEAEAVDRRARRTSGPSTPAAAPAATAVGVGAAADPWDAVTPLRIFIVPPPAAEYEQVAGDLSSELLRSLLWVRYSRLWQAPAPAPALPCKPPLLPGEQGRRQWTAAVAAAPRTDVEAYCRSLRAGQTARADPAYVHSPFFPAAFIEFQIWPALRRVLSNELPKTRSLAALRWLVSFGSDLALPSPELTRARRPLELIYATVWEIYDGAPPMPGESPQAVGLRPLNLEGEGKAGDAGAEGAEDEEGGGPWGLSSHDAVLRIMDAVREVSGIISETISASERAAEAPPLAWPTSLFSLLFTLRYSTTAESLGLATRRFLVSGETLSEDISRLTGAAWRLCSRPLLYDAETGRVQIPLATEEEEEAVVAVKEKSVSSSPRHYSTDLQTLKSVVEGIQDVCRDAAARWALATADTATLRRRLLVPALRESRGIADHPLWAHTSEPLRPDLEELNERVEHALELGYSLTGALRRSVAYRFRDYTFARLFQPPAIDAERAEAIVRRDARPPPVFIPAPRRLPQGGADTPPPLSMDDILYLGKSICKALVDVLDHHPAAPETTPIKTYTPAMDLNPEQITVTPRSPSVLAAFARTARVQTHHLVPALTDDSPSPVGQTPPPFRILPAKKLAAILLGNGRNASKRRASRDLSPPPHGRWRAVLDSSPFSFSSSDFSDQDEGEGGEADLRGVPGGGGEGAYEEDRERPSDIDTAARAQKVETSCPRRRSPRTTPSPSRRASGGGGPDRGEAEAHTYPPYLSAAAAASRVRPRTRRGATRRPPRPTAEDE</sequence>
<organismHost>
    <name type="scientific">Homo sapiens</name>
    <name type="common">Human</name>
    <dbReference type="NCBI Taxonomy" id="9606"/>
</organismHost>
<reference key="1">
    <citation type="journal article" date="1984" name="Nature">
        <title>DNA sequence and expression of the B95-8 Epstein-Barr virus genome.</title>
        <authorList>
            <person name="Baer R."/>
            <person name="Bankier A.T."/>
            <person name="Biggin M.D."/>
            <person name="Deininger P.L."/>
            <person name="Farrell P.J."/>
            <person name="Gibson T.J."/>
            <person name="Hatfull G."/>
            <person name="Hudson G.S."/>
            <person name="Satchwell S.C."/>
            <person name="Seguin C."/>
            <person name="Tuffnell P.S."/>
            <person name="Barrell B.G."/>
        </authorList>
    </citation>
    <scope>NUCLEOTIDE SEQUENCE [LARGE SCALE GENOMIC DNA]</scope>
</reference>
<reference key="2">
    <citation type="journal article" date="2003" name="Virology">
        <title>Updated Epstein-Barr virus (EBV) DNA sequence and analysis of a promoter for the BART (CST, BARF0) RNAs of EBV.</title>
        <authorList>
            <person name="de Jesus O."/>
            <person name="Smith P.R."/>
            <person name="Spender L.C."/>
            <person name="Elgueta Karstegl C."/>
            <person name="Niller H.H."/>
            <person name="Huang D."/>
            <person name="Farrell P.J."/>
        </authorList>
    </citation>
    <scope>GENOME REANNOTATION</scope>
</reference>
<reference key="3">
    <citation type="journal article" date="2004" name="Proc. Natl. Acad. Sci. U.S.A.">
        <title>Proteins of purified Epstein-Barr virus.</title>
        <authorList>
            <person name="Johannsen E."/>
            <person name="Luftig M."/>
            <person name="Chase M.R."/>
            <person name="Weicksel S."/>
            <person name="Cahir-McFarland E."/>
            <person name="Illanes D."/>
            <person name="Sarracino D."/>
            <person name="Kieff E."/>
        </authorList>
    </citation>
    <scope>SUBCELLULAR LOCATION</scope>
</reference>
<comment type="function">
    <text evidence="1">Plays an essential role in cytoplasmic secondary envelopment during viral egress. Interacts with the capsid via the large tegument protein/LTP and participates in its transport to the host trans-Golgi network (TGN) where secondary envelopment occurs. Modulates tegumentation and capsid accumulation at the viral assembly complex.</text>
</comment>
<comment type="subunit">
    <text evidence="1">Interacts (via C-terminus) with the large tegument protein/LTP (via N-terminus).</text>
</comment>
<comment type="subcellular location">
    <subcellularLocation>
        <location evidence="1 3">Virion tegument</location>
    </subcellularLocation>
    <subcellularLocation>
        <location evidence="1">Host cytoplasm</location>
    </subcellularLocation>
    <subcellularLocation>
        <location evidence="1">Host nucleus</location>
    </subcellularLocation>
    <subcellularLocation>
        <location evidence="1">Host Golgi apparatus</location>
        <location evidence="1">Host trans-Golgi network</location>
    </subcellularLocation>
</comment>
<comment type="similarity">
    <text evidence="1">Belongs to the herpesviridae inner tegument protein family.</text>
</comment>
<protein>
    <recommendedName>
        <fullName evidence="1">Inner tegument protein</fullName>
    </recommendedName>
</protein>
<organism>
    <name type="scientific">Epstein-Barr virus (strain B95-8)</name>
    <name type="common">HHV-4</name>
    <name type="synonym">Human herpesvirus 4</name>
    <dbReference type="NCBI Taxonomy" id="10377"/>
    <lineage>
        <taxon>Viruses</taxon>
        <taxon>Duplodnaviria</taxon>
        <taxon>Heunggongvirae</taxon>
        <taxon>Peploviricota</taxon>
        <taxon>Herviviricetes</taxon>
        <taxon>Herpesvirales</taxon>
        <taxon>Orthoherpesviridae</taxon>
        <taxon>Gammaherpesvirinae</taxon>
        <taxon>Lymphocryptovirus</taxon>
        <taxon>Lymphocryptovirus humangamma4</taxon>
        <taxon>Epstein-Barr virus (strain GD1)</taxon>
    </lineage>
</organism>
<feature type="chain" id="PRO_0000116051" description="Inner tegument protein">
    <location>
        <begin position="1"/>
        <end position="1239"/>
    </location>
</feature>
<feature type="region of interest" description="Disordered" evidence="2">
    <location>
        <begin position="1"/>
        <end position="20"/>
    </location>
</feature>
<feature type="region of interest" description="Interaction with large tegument protein" evidence="1">
    <location>
        <begin position="618"/>
        <end position="1239"/>
    </location>
</feature>
<feature type="region of interest" description="Disordered" evidence="2">
    <location>
        <begin position="672"/>
        <end position="708"/>
    </location>
</feature>
<feature type="region of interest" description="Disordered" evidence="2">
    <location>
        <begin position="1090"/>
        <end position="1239"/>
    </location>
</feature>
<feature type="compositionally biased region" description="Low complexity" evidence="2">
    <location>
        <begin position="1"/>
        <end position="10"/>
    </location>
</feature>
<feature type="compositionally biased region" description="Low complexity" evidence="2">
    <location>
        <begin position="1115"/>
        <end position="1126"/>
    </location>
</feature>
<feature type="compositionally biased region" description="Acidic residues" evidence="2">
    <location>
        <begin position="1127"/>
        <end position="1136"/>
    </location>
</feature>
<feature type="compositionally biased region" description="Low complexity" evidence="2">
    <location>
        <begin position="1181"/>
        <end position="1190"/>
    </location>
</feature>
<feature type="compositionally biased region" description="Basic residues" evidence="2">
    <location>
        <begin position="1219"/>
        <end position="1232"/>
    </location>
</feature>
<proteinExistence type="inferred from homology"/>
<evidence type="ECO:0000255" key="1">
    <source>
        <dbReference type="HAMAP-Rule" id="MF_04043"/>
    </source>
</evidence>
<evidence type="ECO:0000256" key="2">
    <source>
        <dbReference type="SAM" id="MobiDB-lite"/>
    </source>
</evidence>
<evidence type="ECO:0000269" key="3">
    <source>
    </source>
</evidence>
<gene>
    <name type="ORF">BOLF1</name>
</gene>
<accession>P03189</accession>
<accession>Q777G3</accession>